<name>RECA_XENNA</name>
<dbReference type="EMBL" id="AF127333">
    <property type="protein sequence ID" value="AAD32599.1"/>
    <property type="molecule type" value="Genomic_DNA"/>
</dbReference>
<dbReference type="EMBL" id="FN667742">
    <property type="protein sequence ID" value="CBJ89332.1"/>
    <property type="molecule type" value="Genomic_DNA"/>
</dbReference>
<dbReference type="RefSeq" id="WP_010845369.1">
    <property type="nucleotide sequence ID" value="NC_014228.1"/>
</dbReference>
<dbReference type="SMR" id="Q9X5P5"/>
<dbReference type="STRING" id="406817.XNC1_1261"/>
<dbReference type="GeneID" id="24905383"/>
<dbReference type="KEGG" id="xne:XNC1_1261"/>
<dbReference type="eggNOG" id="COG0468">
    <property type="taxonomic scope" value="Bacteria"/>
</dbReference>
<dbReference type="HOGENOM" id="CLU_040469_3_2_6"/>
<dbReference type="Proteomes" id="UP000008075">
    <property type="component" value="Chromosome"/>
</dbReference>
<dbReference type="GO" id="GO:0005829">
    <property type="term" value="C:cytosol"/>
    <property type="evidence" value="ECO:0007669"/>
    <property type="project" value="TreeGrafter"/>
</dbReference>
<dbReference type="GO" id="GO:0005524">
    <property type="term" value="F:ATP binding"/>
    <property type="evidence" value="ECO:0007669"/>
    <property type="project" value="UniProtKB-UniRule"/>
</dbReference>
<dbReference type="GO" id="GO:0016887">
    <property type="term" value="F:ATP hydrolysis activity"/>
    <property type="evidence" value="ECO:0007669"/>
    <property type="project" value="InterPro"/>
</dbReference>
<dbReference type="GO" id="GO:0140664">
    <property type="term" value="F:ATP-dependent DNA damage sensor activity"/>
    <property type="evidence" value="ECO:0007669"/>
    <property type="project" value="InterPro"/>
</dbReference>
<dbReference type="GO" id="GO:0003684">
    <property type="term" value="F:damaged DNA binding"/>
    <property type="evidence" value="ECO:0007669"/>
    <property type="project" value="UniProtKB-UniRule"/>
</dbReference>
<dbReference type="GO" id="GO:0003697">
    <property type="term" value="F:single-stranded DNA binding"/>
    <property type="evidence" value="ECO:0007669"/>
    <property type="project" value="UniProtKB-UniRule"/>
</dbReference>
<dbReference type="GO" id="GO:0006310">
    <property type="term" value="P:DNA recombination"/>
    <property type="evidence" value="ECO:0007669"/>
    <property type="project" value="UniProtKB-UniRule"/>
</dbReference>
<dbReference type="GO" id="GO:0006281">
    <property type="term" value="P:DNA repair"/>
    <property type="evidence" value="ECO:0007669"/>
    <property type="project" value="UniProtKB-UniRule"/>
</dbReference>
<dbReference type="GO" id="GO:0009432">
    <property type="term" value="P:SOS response"/>
    <property type="evidence" value="ECO:0007669"/>
    <property type="project" value="UniProtKB-UniRule"/>
</dbReference>
<dbReference type="CDD" id="cd00983">
    <property type="entry name" value="RecA"/>
    <property type="match status" value="1"/>
</dbReference>
<dbReference type="FunFam" id="3.40.50.300:FF:000087">
    <property type="entry name" value="Recombinase RecA"/>
    <property type="match status" value="1"/>
</dbReference>
<dbReference type="Gene3D" id="3.40.50.300">
    <property type="entry name" value="P-loop containing nucleotide triphosphate hydrolases"/>
    <property type="match status" value="1"/>
</dbReference>
<dbReference type="HAMAP" id="MF_00268">
    <property type="entry name" value="RecA"/>
    <property type="match status" value="1"/>
</dbReference>
<dbReference type="InterPro" id="IPR003593">
    <property type="entry name" value="AAA+_ATPase"/>
</dbReference>
<dbReference type="InterPro" id="IPR013765">
    <property type="entry name" value="DNA_recomb/repair_RecA"/>
</dbReference>
<dbReference type="InterPro" id="IPR020584">
    <property type="entry name" value="DNA_recomb/repair_RecA_CS"/>
</dbReference>
<dbReference type="InterPro" id="IPR027417">
    <property type="entry name" value="P-loop_NTPase"/>
</dbReference>
<dbReference type="InterPro" id="IPR049261">
    <property type="entry name" value="RecA-like_C"/>
</dbReference>
<dbReference type="InterPro" id="IPR049428">
    <property type="entry name" value="RecA-like_N"/>
</dbReference>
<dbReference type="InterPro" id="IPR020588">
    <property type="entry name" value="RecA_ATP-bd"/>
</dbReference>
<dbReference type="InterPro" id="IPR023400">
    <property type="entry name" value="RecA_C_sf"/>
</dbReference>
<dbReference type="InterPro" id="IPR020587">
    <property type="entry name" value="RecA_monomer-monomer_interface"/>
</dbReference>
<dbReference type="NCBIfam" id="TIGR02012">
    <property type="entry name" value="tigrfam_recA"/>
    <property type="match status" value="1"/>
</dbReference>
<dbReference type="PANTHER" id="PTHR45900:SF1">
    <property type="entry name" value="MITOCHONDRIAL DNA REPAIR PROTEIN RECA HOMOLOG-RELATED"/>
    <property type="match status" value="1"/>
</dbReference>
<dbReference type="PANTHER" id="PTHR45900">
    <property type="entry name" value="RECA"/>
    <property type="match status" value="1"/>
</dbReference>
<dbReference type="Pfam" id="PF00154">
    <property type="entry name" value="RecA"/>
    <property type="match status" value="1"/>
</dbReference>
<dbReference type="Pfam" id="PF21096">
    <property type="entry name" value="RecA_C"/>
    <property type="match status" value="1"/>
</dbReference>
<dbReference type="PRINTS" id="PR00142">
    <property type="entry name" value="RECA"/>
</dbReference>
<dbReference type="SMART" id="SM00382">
    <property type="entry name" value="AAA"/>
    <property type="match status" value="1"/>
</dbReference>
<dbReference type="SUPFAM" id="SSF52540">
    <property type="entry name" value="P-loop containing nucleoside triphosphate hydrolases"/>
    <property type="match status" value="1"/>
</dbReference>
<dbReference type="SUPFAM" id="SSF54752">
    <property type="entry name" value="RecA protein, C-terminal domain"/>
    <property type="match status" value="1"/>
</dbReference>
<dbReference type="PROSITE" id="PS00321">
    <property type="entry name" value="RECA_1"/>
    <property type="match status" value="1"/>
</dbReference>
<dbReference type="PROSITE" id="PS50162">
    <property type="entry name" value="RECA_2"/>
    <property type="match status" value="1"/>
</dbReference>
<dbReference type="PROSITE" id="PS50163">
    <property type="entry name" value="RECA_3"/>
    <property type="match status" value="1"/>
</dbReference>
<comment type="function">
    <text evidence="1">Can catalyze the hydrolysis of ATP in the presence of single-stranded DNA, the ATP-dependent uptake of single-stranded DNA by duplex DNA, and the ATP-dependent hybridization of homologous single-stranded DNAs. It interacts with LexA causing its activation and leading to its autocatalytic cleavage.</text>
</comment>
<comment type="subcellular location">
    <subcellularLocation>
        <location evidence="1">Cytoplasm</location>
    </subcellularLocation>
</comment>
<comment type="similarity">
    <text evidence="1">Belongs to the RecA family.</text>
</comment>
<evidence type="ECO:0000255" key="1">
    <source>
        <dbReference type="HAMAP-Rule" id="MF_00268"/>
    </source>
</evidence>
<evidence type="ECO:0000305" key="2"/>
<protein>
    <recommendedName>
        <fullName evidence="1">Protein RecA</fullName>
    </recommendedName>
    <alternativeName>
        <fullName evidence="1">Recombinase A</fullName>
    </alternativeName>
</protein>
<feature type="chain" id="PRO_0000122907" description="Protein RecA">
    <location>
        <begin position="1"/>
        <end position="358"/>
    </location>
</feature>
<feature type="binding site" evidence="1">
    <location>
        <begin position="67"/>
        <end position="74"/>
    </location>
    <ligand>
        <name>ATP</name>
        <dbReference type="ChEBI" id="CHEBI:30616"/>
    </ligand>
</feature>
<feature type="sequence conflict" description="In Ref. 1; AAD32599." evidence="2" ref="1">
    <original>TT</original>
    <variation>PP</variation>
    <location>
        <begin position="210"/>
        <end position="211"/>
    </location>
</feature>
<feature type="sequence conflict" description="In Ref. 1; AAD32599." evidence="2" ref="1">
    <original>G</original>
    <variation>S</variation>
    <location>
        <position position="279"/>
    </location>
</feature>
<keyword id="KW-0067">ATP-binding</keyword>
<keyword id="KW-0963">Cytoplasm</keyword>
<keyword id="KW-0227">DNA damage</keyword>
<keyword id="KW-0233">DNA recombination</keyword>
<keyword id="KW-0234">DNA repair</keyword>
<keyword id="KW-0238">DNA-binding</keyword>
<keyword id="KW-0547">Nucleotide-binding</keyword>
<keyword id="KW-1185">Reference proteome</keyword>
<keyword id="KW-0742">SOS response</keyword>
<gene>
    <name evidence="1" type="primary">recA</name>
    <name type="ordered locus">XNC1_1261</name>
</gene>
<organism>
    <name type="scientific">Xenorhabdus nematophila (strain ATCC 19061 / DSM 3370 / CCUG 14189 / LMG 1036 / NCIMB 9965 / AN6)</name>
    <dbReference type="NCBI Taxonomy" id="406817"/>
    <lineage>
        <taxon>Bacteria</taxon>
        <taxon>Pseudomonadati</taxon>
        <taxon>Pseudomonadota</taxon>
        <taxon>Gammaproteobacteria</taxon>
        <taxon>Enterobacterales</taxon>
        <taxon>Morganellaceae</taxon>
        <taxon>Xenorhabdus</taxon>
    </lineage>
</organism>
<accession>Q9X5P5</accession>
<accession>D3V9U4</accession>
<sequence>MANDENKQKALAAALGQIEKQFGKGSIMRLGENRSMDVETISTGSLSLDIALGAGGLPMGRIVEIYGPESSGKTTLTLQVIAAAQREGRTCAFIDAEHALDPVYAKKLGVDIDNLLCSQPDTGEQALEICDALSRSGAVDVIIVDSVAALTPKAEIEGEIGDSHMGLAARMMSQAMRKLAGNLKNSNTLLIFINQIRMKIGVMFGNPETTTGGNALKFYASVRLDIRRTGSVKNGDEVVGSETRVKVVKNKVAAPFKQAEFQILYGEGINTLGELIDLGVKHKMVEKAGAWYSYNGDKIGQGKANATIYLKEHPETAAELNKKLRDLLLHNTGDFSSAASDYVTDYEDNTEEVNNEEF</sequence>
<proteinExistence type="inferred from homology"/>
<reference key="1">
    <citation type="submission" date="1999-02" db="EMBL/GenBank/DDBJ databases">
        <title>Analysis of the Xenorhabdus nematophilus AN6 recA gene sequence.</title>
        <authorList>
            <person name="Hew F.H."/>
            <person name="Thomas C.J."/>
        </authorList>
    </citation>
    <scope>NUCLEOTIDE SEQUENCE [GENOMIC DNA]</scope>
    <source>
        <strain>ATCC 19061 / DSM 3370 / CCUG 14189 / LMG 1036 / NCIMB 9965 / AN6</strain>
    </source>
</reference>
<reference key="2">
    <citation type="journal article" date="2011" name="PLoS ONE">
        <title>The entomopathogenic bacterial endosymbionts xenorhabdus and photorhabdus: convergent lifestyles from divergent genomes.</title>
        <authorList>
            <person name="Chaston J.M."/>
            <person name="Suen G."/>
            <person name="Tucker S.L."/>
            <person name="Andersen A.W."/>
            <person name="Bhasin A."/>
            <person name="Bode E."/>
            <person name="Bode H.B."/>
            <person name="Brachmann A.O."/>
            <person name="Cowles C.E."/>
            <person name="Cowles K.N."/>
            <person name="Darby C."/>
            <person name="de Leon L."/>
            <person name="Drace K."/>
            <person name="Du Z."/>
            <person name="Givaudan A."/>
            <person name="Herbert Tran E.E."/>
            <person name="Jewell K.A."/>
            <person name="Knack J.J."/>
            <person name="Krasomil-Osterfeld K.C."/>
            <person name="Kukor R."/>
            <person name="Lanois A."/>
            <person name="Latreille P."/>
            <person name="Leimgruber N.K."/>
            <person name="Lipke C.M."/>
            <person name="Liu R."/>
            <person name="Lu X."/>
            <person name="Martens E.C."/>
            <person name="Marri P.R."/>
            <person name="Medigue C."/>
            <person name="Menard M.L."/>
            <person name="Miller N.M."/>
            <person name="Morales-Soto N."/>
            <person name="Norton S."/>
            <person name="Ogier J.C."/>
            <person name="Orchard S.S."/>
            <person name="Park D."/>
            <person name="Park Y."/>
            <person name="Qurollo B.A."/>
            <person name="Sugar D.R."/>
            <person name="Richards G.R."/>
            <person name="Rouy Z."/>
            <person name="Slominski B."/>
            <person name="Slominski K."/>
            <person name="Snyder H."/>
            <person name="Tjaden B.C."/>
            <person name="van der Hoeven R."/>
            <person name="Welch R.D."/>
            <person name="Wheeler C."/>
            <person name="Xiang B."/>
            <person name="Barbazuk B."/>
            <person name="Gaudriault S."/>
            <person name="Goodner B."/>
            <person name="Slater S.C."/>
            <person name="Forst S."/>
            <person name="Goldman B.S."/>
            <person name="Goodrich-Blair H."/>
        </authorList>
    </citation>
    <scope>NUCLEOTIDE SEQUENCE [LARGE SCALE GENOMIC DNA]</scope>
    <source>
        <strain>ATCC 19061 / DSM 3370 / CCUG 14189 / LMG 1036 / NCIMB 9965 / AN6</strain>
    </source>
</reference>